<feature type="chain" id="PRO_1000214774" description="Small ribosomal subunit protein uS17">
    <location>
        <begin position="1"/>
        <end position="91"/>
    </location>
</feature>
<accession>B7J476</accession>
<reference key="1">
    <citation type="journal article" date="2008" name="BMC Genomics">
        <title>Acidithiobacillus ferrooxidans metabolism: from genome sequence to industrial applications.</title>
        <authorList>
            <person name="Valdes J."/>
            <person name="Pedroso I."/>
            <person name="Quatrini R."/>
            <person name="Dodson R.J."/>
            <person name="Tettelin H."/>
            <person name="Blake R. II"/>
            <person name="Eisen J.A."/>
            <person name="Holmes D.S."/>
        </authorList>
    </citation>
    <scope>NUCLEOTIDE SEQUENCE [LARGE SCALE GENOMIC DNA]</scope>
    <source>
        <strain>ATCC 23270 / DSM 14882 / CIP 104768 / NCIMB 8455</strain>
    </source>
</reference>
<sequence length="91" mass="10368">MTEAKNPRSLVGTVVSNLMDKSIVVNVERRIQHPLYKKYIRRSKKFHAHDAENICHIGDIVKIEECRPLSKTKSWRLVSVLAEGVIEGDNA</sequence>
<organism>
    <name type="scientific">Acidithiobacillus ferrooxidans (strain ATCC 23270 / DSM 14882 / CIP 104768 / NCIMB 8455)</name>
    <name type="common">Ferrobacillus ferrooxidans (strain ATCC 23270)</name>
    <dbReference type="NCBI Taxonomy" id="243159"/>
    <lineage>
        <taxon>Bacteria</taxon>
        <taxon>Pseudomonadati</taxon>
        <taxon>Pseudomonadota</taxon>
        <taxon>Acidithiobacillia</taxon>
        <taxon>Acidithiobacillales</taxon>
        <taxon>Acidithiobacillaceae</taxon>
        <taxon>Acidithiobacillus</taxon>
    </lineage>
</organism>
<name>RS17_ACIF2</name>
<keyword id="KW-1185">Reference proteome</keyword>
<keyword id="KW-0687">Ribonucleoprotein</keyword>
<keyword id="KW-0689">Ribosomal protein</keyword>
<keyword id="KW-0694">RNA-binding</keyword>
<keyword id="KW-0699">rRNA-binding</keyword>
<protein>
    <recommendedName>
        <fullName evidence="1">Small ribosomal subunit protein uS17</fullName>
    </recommendedName>
    <alternativeName>
        <fullName evidence="2">30S ribosomal protein S17</fullName>
    </alternativeName>
</protein>
<proteinExistence type="inferred from homology"/>
<comment type="function">
    <text evidence="1">One of the primary rRNA binding proteins, it binds specifically to the 5'-end of 16S ribosomal RNA.</text>
</comment>
<comment type="subunit">
    <text evidence="1">Part of the 30S ribosomal subunit.</text>
</comment>
<comment type="similarity">
    <text evidence="1">Belongs to the universal ribosomal protein uS17 family.</text>
</comment>
<evidence type="ECO:0000255" key="1">
    <source>
        <dbReference type="HAMAP-Rule" id="MF_01345"/>
    </source>
</evidence>
<evidence type="ECO:0000305" key="2"/>
<gene>
    <name evidence="1" type="primary">rpsQ</name>
    <name type="ordered locus">AFE_0336</name>
</gene>
<dbReference type="EMBL" id="CP001219">
    <property type="protein sequence ID" value="ACK79290.1"/>
    <property type="molecule type" value="Genomic_DNA"/>
</dbReference>
<dbReference type="RefSeq" id="WP_009569558.1">
    <property type="nucleotide sequence ID" value="NC_011761.1"/>
</dbReference>
<dbReference type="SMR" id="B7J476"/>
<dbReference type="STRING" id="243159.AFE_0336"/>
<dbReference type="PaxDb" id="243159-AFE_0336"/>
<dbReference type="GeneID" id="65279715"/>
<dbReference type="KEGG" id="afr:AFE_0336"/>
<dbReference type="eggNOG" id="COG0186">
    <property type="taxonomic scope" value="Bacteria"/>
</dbReference>
<dbReference type="HOGENOM" id="CLU_073626_1_1_6"/>
<dbReference type="Proteomes" id="UP000001362">
    <property type="component" value="Chromosome"/>
</dbReference>
<dbReference type="GO" id="GO:0022627">
    <property type="term" value="C:cytosolic small ribosomal subunit"/>
    <property type="evidence" value="ECO:0007669"/>
    <property type="project" value="TreeGrafter"/>
</dbReference>
<dbReference type="GO" id="GO:0019843">
    <property type="term" value="F:rRNA binding"/>
    <property type="evidence" value="ECO:0007669"/>
    <property type="project" value="UniProtKB-UniRule"/>
</dbReference>
<dbReference type="GO" id="GO:0003735">
    <property type="term" value="F:structural constituent of ribosome"/>
    <property type="evidence" value="ECO:0007669"/>
    <property type="project" value="InterPro"/>
</dbReference>
<dbReference type="GO" id="GO:0006412">
    <property type="term" value="P:translation"/>
    <property type="evidence" value="ECO:0007669"/>
    <property type="project" value="UniProtKB-UniRule"/>
</dbReference>
<dbReference type="CDD" id="cd00364">
    <property type="entry name" value="Ribosomal_uS17"/>
    <property type="match status" value="1"/>
</dbReference>
<dbReference type="Gene3D" id="2.40.50.140">
    <property type="entry name" value="Nucleic acid-binding proteins"/>
    <property type="match status" value="1"/>
</dbReference>
<dbReference type="HAMAP" id="MF_01345_B">
    <property type="entry name" value="Ribosomal_uS17_B"/>
    <property type="match status" value="1"/>
</dbReference>
<dbReference type="InterPro" id="IPR012340">
    <property type="entry name" value="NA-bd_OB-fold"/>
</dbReference>
<dbReference type="InterPro" id="IPR000266">
    <property type="entry name" value="Ribosomal_uS17"/>
</dbReference>
<dbReference type="InterPro" id="IPR019984">
    <property type="entry name" value="Ribosomal_uS17_bact/chlr"/>
</dbReference>
<dbReference type="InterPro" id="IPR019979">
    <property type="entry name" value="Ribosomal_uS17_CS"/>
</dbReference>
<dbReference type="NCBIfam" id="NF004123">
    <property type="entry name" value="PRK05610.1"/>
    <property type="match status" value="1"/>
</dbReference>
<dbReference type="NCBIfam" id="TIGR03635">
    <property type="entry name" value="uS17_bact"/>
    <property type="match status" value="1"/>
</dbReference>
<dbReference type="PANTHER" id="PTHR10744">
    <property type="entry name" value="40S RIBOSOMAL PROTEIN S11 FAMILY MEMBER"/>
    <property type="match status" value="1"/>
</dbReference>
<dbReference type="PANTHER" id="PTHR10744:SF1">
    <property type="entry name" value="SMALL RIBOSOMAL SUBUNIT PROTEIN US17M"/>
    <property type="match status" value="1"/>
</dbReference>
<dbReference type="Pfam" id="PF00366">
    <property type="entry name" value="Ribosomal_S17"/>
    <property type="match status" value="1"/>
</dbReference>
<dbReference type="PRINTS" id="PR00973">
    <property type="entry name" value="RIBOSOMALS17"/>
</dbReference>
<dbReference type="SUPFAM" id="SSF50249">
    <property type="entry name" value="Nucleic acid-binding proteins"/>
    <property type="match status" value="1"/>
</dbReference>
<dbReference type="PROSITE" id="PS00056">
    <property type="entry name" value="RIBOSOMAL_S17"/>
    <property type="match status" value="1"/>
</dbReference>